<name>DNLJ_CERS4</name>
<reference key="1">
    <citation type="submission" date="2005-09" db="EMBL/GenBank/DDBJ databases">
        <title>Complete sequence of chromosome 1 of Rhodobacter sphaeroides 2.4.1.</title>
        <authorList>
            <person name="Copeland A."/>
            <person name="Lucas S."/>
            <person name="Lapidus A."/>
            <person name="Barry K."/>
            <person name="Detter J.C."/>
            <person name="Glavina T."/>
            <person name="Hammon N."/>
            <person name="Israni S."/>
            <person name="Pitluck S."/>
            <person name="Richardson P."/>
            <person name="Mackenzie C."/>
            <person name="Choudhary M."/>
            <person name="Larimer F."/>
            <person name="Hauser L.J."/>
            <person name="Land M."/>
            <person name="Donohue T.J."/>
            <person name="Kaplan S."/>
        </authorList>
    </citation>
    <scope>NUCLEOTIDE SEQUENCE [LARGE SCALE GENOMIC DNA]</scope>
    <source>
        <strain>ATCC 17023 / DSM 158 / JCM 6121 / CCUG 31486 / LMG 2827 / NBRC 12203 / NCIMB 8253 / ATH 2.4.1.</strain>
    </source>
</reference>
<evidence type="ECO:0000255" key="1">
    <source>
        <dbReference type="HAMAP-Rule" id="MF_01588"/>
    </source>
</evidence>
<comment type="function">
    <text evidence="1">DNA ligase that catalyzes the formation of phosphodiester linkages between 5'-phosphoryl and 3'-hydroxyl groups in double-stranded DNA using NAD as a coenzyme and as the energy source for the reaction. It is essential for DNA replication and repair of damaged DNA.</text>
</comment>
<comment type="catalytic activity">
    <reaction evidence="1">
        <text>NAD(+) + (deoxyribonucleotide)n-3'-hydroxyl + 5'-phospho-(deoxyribonucleotide)m = (deoxyribonucleotide)n+m + AMP + beta-nicotinamide D-nucleotide.</text>
        <dbReference type="EC" id="6.5.1.2"/>
    </reaction>
</comment>
<comment type="cofactor">
    <cofactor evidence="1">
        <name>Mg(2+)</name>
        <dbReference type="ChEBI" id="CHEBI:18420"/>
    </cofactor>
    <cofactor evidence="1">
        <name>Mn(2+)</name>
        <dbReference type="ChEBI" id="CHEBI:29035"/>
    </cofactor>
</comment>
<comment type="similarity">
    <text evidence="1">Belongs to the NAD-dependent DNA ligase family. LigA subfamily.</text>
</comment>
<dbReference type="EC" id="6.5.1.2" evidence="1"/>
<dbReference type="EMBL" id="CP000143">
    <property type="protein sequence ID" value="ABA78779.1"/>
    <property type="molecule type" value="Genomic_DNA"/>
</dbReference>
<dbReference type="RefSeq" id="WP_011337614.1">
    <property type="nucleotide sequence ID" value="NC_007493.2"/>
</dbReference>
<dbReference type="RefSeq" id="YP_352680.1">
    <property type="nucleotide sequence ID" value="NC_007493.2"/>
</dbReference>
<dbReference type="SMR" id="Q3J355"/>
<dbReference type="STRING" id="272943.RSP_2622"/>
<dbReference type="EnsemblBacteria" id="ABA78779">
    <property type="protein sequence ID" value="ABA78779"/>
    <property type="gene ID" value="RSP_2622"/>
</dbReference>
<dbReference type="GeneID" id="3720295"/>
<dbReference type="KEGG" id="rsp:RSP_2622"/>
<dbReference type="PATRIC" id="fig|272943.9.peg.1540"/>
<dbReference type="eggNOG" id="COG0272">
    <property type="taxonomic scope" value="Bacteria"/>
</dbReference>
<dbReference type="OrthoDB" id="9759736at2"/>
<dbReference type="PhylomeDB" id="Q3J355"/>
<dbReference type="Proteomes" id="UP000002703">
    <property type="component" value="Chromosome 1"/>
</dbReference>
<dbReference type="GO" id="GO:0005829">
    <property type="term" value="C:cytosol"/>
    <property type="evidence" value="ECO:0007669"/>
    <property type="project" value="TreeGrafter"/>
</dbReference>
<dbReference type="GO" id="GO:0003911">
    <property type="term" value="F:DNA ligase (NAD+) activity"/>
    <property type="evidence" value="ECO:0007669"/>
    <property type="project" value="UniProtKB-UniRule"/>
</dbReference>
<dbReference type="GO" id="GO:0046872">
    <property type="term" value="F:metal ion binding"/>
    <property type="evidence" value="ECO:0007669"/>
    <property type="project" value="UniProtKB-KW"/>
</dbReference>
<dbReference type="GO" id="GO:0006281">
    <property type="term" value="P:DNA repair"/>
    <property type="evidence" value="ECO:0007669"/>
    <property type="project" value="UniProtKB-KW"/>
</dbReference>
<dbReference type="GO" id="GO:0006260">
    <property type="term" value="P:DNA replication"/>
    <property type="evidence" value="ECO:0007669"/>
    <property type="project" value="UniProtKB-KW"/>
</dbReference>
<dbReference type="CDD" id="cd17748">
    <property type="entry name" value="BRCT_DNA_ligase_like"/>
    <property type="match status" value="1"/>
</dbReference>
<dbReference type="CDD" id="cd00114">
    <property type="entry name" value="LIGANc"/>
    <property type="match status" value="1"/>
</dbReference>
<dbReference type="FunFam" id="1.10.150.20:FF:000007">
    <property type="entry name" value="DNA ligase"/>
    <property type="match status" value="1"/>
</dbReference>
<dbReference type="FunFam" id="3.30.470.30:FF:000001">
    <property type="entry name" value="DNA ligase"/>
    <property type="match status" value="1"/>
</dbReference>
<dbReference type="Gene3D" id="6.20.10.30">
    <property type="match status" value="1"/>
</dbReference>
<dbReference type="Gene3D" id="1.10.150.20">
    <property type="entry name" value="5' to 3' exonuclease, C-terminal subdomain"/>
    <property type="match status" value="2"/>
</dbReference>
<dbReference type="Gene3D" id="3.40.50.10190">
    <property type="entry name" value="BRCT domain"/>
    <property type="match status" value="1"/>
</dbReference>
<dbReference type="Gene3D" id="3.30.470.30">
    <property type="entry name" value="DNA ligase/mRNA capping enzyme"/>
    <property type="match status" value="1"/>
</dbReference>
<dbReference type="Gene3D" id="1.10.287.610">
    <property type="entry name" value="Helix hairpin bin"/>
    <property type="match status" value="1"/>
</dbReference>
<dbReference type="Gene3D" id="2.40.50.140">
    <property type="entry name" value="Nucleic acid-binding proteins"/>
    <property type="match status" value="1"/>
</dbReference>
<dbReference type="HAMAP" id="MF_01588">
    <property type="entry name" value="DNA_ligase_A"/>
    <property type="match status" value="1"/>
</dbReference>
<dbReference type="InterPro" id="IPR001357">
    <property type="entry name" value="BRCT_dom"/>
</dbReference>
<dbReference type="InterPro" id="IPR036420">
    <property type="entry name" value="BRCT_dom_sf"/>
</dbReference>
<dbReference type="InterPro" id="IPR041663">
    <property type="entry name" value="DisA/LigA_HHH"/>
</dbReference>
<dbReference type="InterPro" id="IPR001679">
    <property type="entry name" value="DNA_ligase"/>
</dbReference>
<dbReference type="InterPro" id="IPR018239">
    <property type="entry name" value="DNA_ligase_AS"/>
</dbReference>
<dbReference type="InterPro" id="IPR033136">
    <property type="entry name" value="DNA_ligase_CS"/>
</dbReference>
<dbReference type="InterPro" id="IPR013839">
    <property type="entry name" value="DNAligase_adenylation"/>
</dbReference>
<dbReference type="InterPro" id="IPR013840">
    <property type="entry name" value="DNAligase_N"/>
</dbReference>
<dbReference type="InterPro" id="IPR012340">
    <property type="entry name" value="NA-bd_OB-fold"/>
</dbReference>
<dbReference type="InterPro" id="IPR004150">
    <property type="entry name" value="NAD_DNA_ligase_OB"/>
</dbReference>
<dbReference type="InterPro" id="IPR010994">
    <property type="entry name" value="RuvA_2-like"/>
</dbReference>
<dbReference type="InterPro" id="IPR004149">
    <property type="entry name" value="Znf_DNAligase_C4"/>
</dbReference>
<dbReference type="NCBIfam" id="TIGR00575">
    <property type="entry name" value="dnlj"/>
    <property type="match status" value="1"/>
</dbReference>
<dbReference type="NCBIfam" id="NF005932">
    <property type="entry name" value="PRK07956.1"/>
    <property type="match status" value="1"/>
</dbReference>
<dbReference type="PANTHER" id="PTHR23389">
    <property type="entry name" value="CHROMOSOME TRANSMISSION FIDELITY FACTOR 18"/>
    <property type="match status" value="1"/>
</dbReference>
<dbReference type="PANTHER" id="PTHR23389:SF9">
    <property type="entry name" value="DNA LIGASE"/>
    <property type="match status" value="1"/>
</dbReference>
<dbReference type="Pfam" id="PF00533">
    <property type="entry name" value="BRCT"/>
    <property type="match status" value="1"/>
</dbReference>
<dbReference type="Pfam" id="PF01653">
    <property type="entry name" value="DNA_ligase_aden"/>
    <property type="match status" value="1"/>
</dbReference>
<dbReference type="Pfam" id="PF03120">
    <property type="entry name" value="DNA_ligase_OB"/>
    <property type="match status" value="1"/>
</dbReference>
<dbReference type="Pfam" id="PF03119">
    <property type="entry name" value="DNA_ligase_ZBD"/>
    <property type="match status" value="1"/>
</dbReference>
<dbReference type="Pfam" id="PF12826">
    <property type="entry name" value="HHH_2"/>
    <property type="match status" value="1"/>
</dbReference>
<dbReference type="PIRSF" id="PIRSF001604">
    <property type="entry name" value="LigA"/>
    <property type="match status" value="1"/>
</dbReference>
<dbReference type="SMART" id="SM00292">
    <property type="entry name" value="BRCT"/>
    <property type="match status" value="1"/>
</dbReference>
<dbReference type="SMART" id="SM00532">
    <property type="entry name" value="LIGANc"/>
    <property type="match status" value="1"/>
</dbReference>
<dbReference type="SUPFAM" id="SSF52113">
    <property type="entry name" value="BRCT domain"/>
    <property type="match status" value="1"/>
</dbReference>
<dbReference type="SUPFAM" id="SSF56091">
    <property type="entry name" value="DNA ligase/mRNA capping enzyme, catalytic domain"/>
    <property type="match status" value="1"/>
</dbReference>
<dbReference type="SUPFAM" id="SSF50249">
    <property type="entry name" value="Nucleic acid-binding proteins"/>
    <property type="match status" value="1"/>
</dbReference>
<dbReference type="SUPFAM" id="SSF47781">
    <property type="entry name" value="RuvA domain 2-like"/>
    <property type="match status" value="1"/>
</dbReference>
<dbReference type="PROSITE" id="PS50172">
    <property type="entry name" value="BRCT"/>
    <property type="match status" value="1"/>
</dbReference>
<dbReference type="PROSITE" id="PS01055">
    <property type="entry name" value="DNA_LIGASE_N1"/>
    <property type="match status" value="1"/>
</dbReference>
<dbReference type="PROSITE" id="PS01056">
    <property type="entry name" value="DNA_LIGASE_N2"/>
    <property type="match status" value="1"/>
</dbReference>
<protein>
    <recommendedName>
        <fullName evidence="1">DNA ligase</fullName>
        <ecNumber evidence="1">6.5.1.2</ecNumber>
    </recommendedName>
    <alternativeName>
        <fullName evidence="1">Polydeoxyribonucleotide synthase [NAD(+)]</fullName>
    </alternativeName>
</protein>
<organism>
    <name type="scientific">Cereibacter sphaeroides (strain ATCC 17023 / DSM 158 / JCM 6121 / CCUG 31486 / LMG 2827 / NBRC 12203 / NCIMB 8253 / ATH 2.4.1.)</name>
    <name type="common">Rhodobacter sphaeroides</name>
    <dbReference type="NCBI Taxonomy" id="272943"/>
    <lineage>
        <taxon>Bacteria</taxon>
        <taxon>Pseudomonadati</taxon>
        <taxon>Pseudomonadota</taxon>
        <taxon>Alphaproteobacteria</taxon>
        <taxon>Rhodobacterales</taxon>
        <taxon>Paracoccaceae</taxon>
        <taxon>Cereibacter</taxon>
    </lineage>
</organism>
<keyword id="KW-0227">DNA damage</keyword>
<keyword id="KW-0234">DNA repair</keyword>
<keyword id="KW-0235">DNA replication</keyword>
<keyword id="KW-0436">Ligase</keyword>
<keyword id="KW-0460">Magnesium</keyword>
<keyword id="KW-0464">Manganese</keyword>
<keyword id="KW-0479">Metal-binding</keyword>
<keyword id="KW-0520">NAD</keyword>
<keyword id="KW-1185">Reference proteome</keyword>
<keyword id="KW-0862">Zinc</keyword>
<proteinExistence type="inferred from homology"/>
<feature type="chain" id="PRO_0000313394" description="DNA ligase">
    <location>
        <begin position="1"/>
        <end position="704"/>
    </location>
</feature>
<feature type="domain" description="BRCT" evidence="1">
    <location>
        <begin position="625"/>
        <end position="704"/>
    </location>
</feature>
<feature type="active site" description="N6-AMP-lysine intermediate" evidence="1">
    <location>
        <position position="126"/>
    </location>
</feature>
<feature type="binding site" evidence="1">
    <location>
        <begin position="43"/>
        <end position="47"/>
    </location>
    <ligand>
        <name>NAD(+)</name>
        <dbReference type="ChEBI" id="CHEBI:57540"/>
    </ligand>
</feature>
<feature type="binding site" evidence="1">
    <location>
        <begin position="92"/>
        <end position="93"/>
    </location>
    <ligand>
        <name>NAD(+)</name>
        <dbReference type="ChEBI" id="CHEBI:57540"/>
    </ligand>
</feature>
<feature type="binding site" evidence="1">
    <location>
        <position position="124"/>
    </location>
    <ligand>
        <name>NAD(+)</name>
        <dbReference type="ChEBI" id="CHEBI:57540"/>
    </ligand>
</feature>
<feature type="binding site" evidence="1">
    <location>
        <position position="147"/>
    </location>
    <ligand>
        <name>NAD(+)</name>
        <dbReference type="ChEBI" id="CHEBI:57540"/>
    </ligand>
</feature>
<feature type="binding site" evidence="1">
    <location>
        <position position="182"/>
    </location>
    <ligand>
        <name>NAD(+)</name>
        <dbReference type="ChEBI" id="CHEBI:57540"/>
    </ligand>
</feature>
<feature type="binding site" evidence="1">
    <location>
        <position position="298"/>
    </location>
    <ligand>
        <name>NAD(+)</name>
        <dbReference type="ChEBI" id="CHEBI:57540"/>
    </ligand>
</feature>
<feature type="binding site" evidence="1">
    <location>
        <position position="322"/>
    </location>
    <ligand>
        <name>NAD(+)</name>
        <dbReference type="ChEBI" id="CHEBI:57540"/>
    </ligand>
</feature>
<feature type="binding site" evidence="1">
    <location>
        <position position="427"/>
    </location>
    <ligand>
        <name>Zn(2+)</name>
        <dbReference type="ChEBI" id="CHEBI:29105"/>
    </ligand>
</feature>
<feature type="binding site" evidence="1">
    <location>
        <position position="430"/>
    </location>
    <ligand>
        <name>Zn(2+)</name>
        <dbReference type="ChEBI" id="CHEBI:29105"/>
    </ligand>
</feature>
<feature type="binding site" evidence="1">
    <location>
        <position position="445"/>
    </location>
    <ligand>
        <name>Zn(2+)</name>
        <dbReference type="ChEBI" id="CHEBI:29105"/>
    </ligand>
</feature>
<feature type="binding site" evidence="1">
    <location>
        <position position="451"/>
    </location>
    <ligand>
        <name>Zn(2+)</name>
        <dbReference type="ChEBI" id="CHEBI:29105"/>
    </ligand>
</feature>
<accession>Q3J355</accession>
<sequence length="704" mass="76350">MQDERPVDQLTEAEAAAELARLAEAIEAANTAYHTHDAPQISDADYDALKVRNRAIEEQFPELRRSDSPSDRVGGALAEGFAKVRHDVRMLSLENAFDLAEVEDWIERIRRYLGHVGDLLFTAEPKIDGLSLSLRYEKGRLVQAATRGDGETGENVTENARTIADLPTELDGAPDLLEVRGEVYMSHEDFAALNGRQEAAGQRLFANPRNAAAGSLRQLDPAVTASRPLRFFAYAWGAHSEPLAATQHEAIARLAALGFATNPLTRLCTGPEELLAQHAQIERQRAALGYDIDGVVYKVDDLALQRRLGFRASTPRWAIAHKFAAQLAWTQLEGIDIQVGRTGALSPVARLKPVTVGGVVVANATLHNEDYIAGRDSKGQEIRGGKDIRVGDWVQVYRAGDVIPKVADVDLDRRPEGAAPYRFPETCPECGSEAIREPGDSVRRCTGGLICPAQQVERLKHFVSRAAFDIEGLGAKQVEALWRDGWIRQPADIFELPNRYRDGMQRLENREGWGRKSAENLFAAIEARRRIALHRLIFALGIRHVGETTATLLATHYGSWAAFEAAMTRAEVGAGPEWQDLLSIDGVGAVLATSLVTAFHQEAERAAVDALAAHLTVEDAEVRAPVASPVAGKIVVFTGTLEKMSRAEAKARAEALGAKVSGSVSARTDLVVAGPGAGSKAKQAAALGIETIDEDGWLRLIGDA</sequence>
<gene>
    <name evidence="1" type="primary">ligA</name>
    <name type="ordered locus">RHOS4_12110</name>
    <name type="ORF">RSP_2622</name>
</gene>